<dbReference type="EC" id="3.4.24.-" evidence="1"/>
<dbReference type="EMBL" id="CP000802">
    <property type="protein sequence ID" value="ABV06752.1"/>
    <property type="molecule type" value="Genomic_DNA"/>
</dbReference>
<dbReference type="RefSeq" id="WP_001043816.1">
    <property type="nucleotide sequence ID" value="NC_009800.1"/>
</dbReference>
<dbReference type="SMR" id="A8A2J8"/>
<dbReference type="MEROPS" id="M74.001"/>
<dbReference type="KEGG" id="ecx:EcHS_A2480"/>
<dbReference type="HOGENOM" id="CLU_052496_0_0_6"/>
<dbReference type="GO" id="GO:0030288">
    <property type="term" value="C:outer membrane-bounded periplasmic space"/>
    <property type="evidence" value="ECO:0007669"/>
    <property type="project" value="InterPro"/>
</dbReference>
<dbReference type="GO" id="GO:0046872">
    <property type="term" value="F:metal ion binding"/>
    <property type="evidence" value="ECO:0007669"/>
    <property type="project" value="UniProtKB-KW"/>
</dbReference>
<dbReference type="GO" id="GO:0004222">
    <property type="term" value="F:metalloendopeptidase activity"/>
    <property type="evidence" value="ECO:0007669"/>
    <property type="project" value="UniProtKB-UniRule"/>
</dbReference>
<dbReference type="GO" id="GO:0004252">
    <property type="term" value="F:serine-type endopeptidase activity"/>
    <property type="evidence" value="ECO:0007669"/>
    <property type="project" value="InterPro"/>
</dbReference>
<dbReference type="GO" id="GO:0000270">
    <property type="term" value="P:peptidoglycan metabolic process"/>
    <property type="evidence" value="ECO:0007669"/>
    <property type="project" value="UniProtKB-UniRule"/>
</dbReference>
<dbReference type="GO" id="GO:0006508">
    <property type="term" value="P:proteolysis"/>
    <property type="evidence" value="ECO:0007669"/>
    <property type="project" value="UniProtKB-KW"/>
</dbReference>
<dbReference type="FunFam" id="3.30.1380.10:FF:000002">
    <property type="entry name" value="Penicillin-insensitive murein endopeptidase"/>
    <property type="match status" value="1"/>
</dbReference>
<dbReference type="Gene3D" id="3.30.1380.10">
    <property type="match status" value="1"/>
</dbReference>
<dbReference type="HAMAP" id="MF_01623">
    <property type="entry name" value="MepA"/>
    <property type="match status" value="1"/>
</dbReference>
<dbReference type="InterPro" id="IPR009045">
    <property type="entry name" value="Hedgehog_sig/DD-Pept_Zn-bd_sf"/>
</dbReference>
<dbReference type="InterPro" id="IPR005073">
    <property type="entry name" value="Peptidase_M74"/>
</dbReference>
<dbReference type="NCBIfam" id="NF006947">
    <property type="entry name" value="PRK09429.1"/>
    <property type="match status" value="1"/>
</dbReference>
<dbReference type="Pfam" id="PF03411">
    <property type="entry name" value="Peptidase_M74"/>
    <property type="match status" value="1"/>
</dbReference>
<dbReference type="PIRSF" id="PIRSF018455">
    <property type="entry name" value="MepA"/>
    <property type="match status" value="1"/>
</dbReference>
<dbReference type="SUPFAM" id="SSF55166">
    <property type="entry name" value="Hedgehog/DD-peptidase"/>
    <property type="match status" value="1"/>
</dbReference>
<accession>A8A2J8</accession>
<gene>
    <name evidence="1" type="primary">mepA</name>
    <name type="ordered locus">EcHS_A2480</name>
</gene>
<keyword id="KW-1015">Disulfide bond</keyword>
<keyword id="KW-0378">Hydrolase</keyword>
<keyword id="KW-0479">Metal-binding</keyword>
<keyword id="KW-0482">Metalloprotease</keyword>
<keyword id="KW-0574">Periplasm</keyword>
<keyword id="KW-0645">Protease</keyword>
<keyword id="KW-0732">Signal</keyword>
<keyword id="KW-0862">Zinc</keyword>
<comment type="function">
    <text evidence="1">Murein endopeptidase that cleaves the D-alanyl-meso-2,6-diamino-pimelyl amide bond that connects peptidoglycan strands. Likely plays a role in the removal of murein from the sacculus.</text>
</comment>
<comment type="cofactor">
    <cofactor evidence="1">
        <name>Zn(2+)</name>
        <dbReference type="ChEBI" id="CHEBI:29105"/>
    </cofactor>
    <text evidence="1">Binds 2 Zn(2+) ions per subunit. Zn(2+) ion 1 is bound in the active site. Zn(2+) ion 2 is bound at the dimer interface by residues from both subunits.</text>
</comment>
<comment type="subunit">
    <text evidence="1">Dimer.</text>
</comment>
<comment type="subcellular location">
    <subcellularLocation>
        <location evidence="1">Periplasm</location>
    </subcellularLocation>
</comment>
<comment type="similarity">
    <text evidence="1">Belongs to the peptidase M74 family.</text>
</comment>
<reference key="1">
    <citation type="journal article" date="2008" name="J. Bacteriol.">
        <title>The pangenome structure of Escherichia coli: comparative genomic analysis of E. coli commensal and pathogenic isolates.</title>
        <authorList>
            <person name="Rasko D.A."/>
            <person name="Rosovitz M.J."/>
            <person name="Myers G.S.A."/>
            <person name="Mongodin E.F."/>
            <person name="Fricke W.F."/>
            <person name="Gajer P."/>
            <person name="Crabtree J."/>
            <person name="Sebaihia M."/>
            <person name="Thomson N.R."/>
            <person name="Chaudhuri R."/>
            <person name="Henderson I.R."/>
            <person name="Sperandio V."/>
            <person name="Ravel J."/>
        </authorList>
    </citation>
    <scope>NUCLEOTIDE SEQUENCE [LARGE SCALE GENOMIC DNA]</scope>
    <source>
        <strain>HS</strain>
    </source>
</reference>
<sequence>MNKTAIALLALLASSASLAATPWQKITQPVPGSAQSIGSFSNGCIVGADTLPIQSEHYQVMRTDQRRYFGHPDLVMFIQRLSSQVSNLGMGTVLIGDMGMPAGGRFNGGHASHQTGLDVDIFLQLPKTRWTSAQLLRPQALDLVSRDGKHVVSTLWKPEIFSLIKLAAQDKDVTRIFVNPAIKQQLCFDAGTDRDWLRKVRPWFQHRAHMHVRLRCPADSLECEDQPLPPPGDGCGAELQSWFEPPKPGTTKPEKKTPPPLPPSCQALLDEHVI</sequence>
<organism>
    <name type="scientific">Escherichia coli O9:H4 (strain HS)</name>
    <dbReference type="NCBI Taxonomy" id="331112"/>
    <lineage>
        <taxon>Bacteria</taxon>
        <taxon>Pseudomonadati</taxon>
        <taxon>Pseudomonadota</taxon>
        <taxon>Gammaproteobacteria</taxon>
        <taxon>Enterobacterales</taxon>
        <taxon>Enterobacteriaceae</taxon>
        <taxon>Escherichia</taxon>
    </lineage>
</organism>
<feature type="signal peptide" evidence="1">
    <location>
        <begin position="1"/>
        <end position="19"/>
    </location>
</feature>
<feature type="chain" id="PRO_1000069597" description="Penicillin-insensitive murein endopeptidase">
    <location>
        <begin position="20"/>
        <end position="274"/>
    </location>
</feature>
<feature type="region of interest" description="Disordered" evidence="2">
    <location>
        <begin position="227"/>
        <end position="274"/>
    </location>
</feature>
<feature type="binding site" evidence="1">
    <location>
        <position position="110"/>
    </location>
    <ligand>
        <name>Zn(2+)</name>
        <dbReference type="ChEBI" id="CHEBI:29105"/>
        <label>1</label>
    </ligand>
</feature>
<feature type="binding site" evidence="1">
    <location>
        <position position="113"/>
    </location>
    <ligand>
        <name>Zn(2+)</name>
        <dbReference type="ChEBI" id="CHEBI:29105"/>
        <label>1</label>
    </ligand>
</feature>
<feature type="binding site" evidence="1">
    <location>
        <position position="120"/>
    </location>
    <ligand>
        <name>Zn(2+)</name>
        <dbReference type="ChEBI" id="CHEBI:29105"/>
        <label>1</label>
    </ligand>
</feature>
<feature type="binding site" evidence="1">
    <location>
        <position position="147"/>
    </location>
    <ligand>
        <name>Zn(2+)</name>
        <dbReference type="ChEBI" id="CHEBI:29105"/>
        <label>2</label>
    </ligand>
</feature>
<feature type="binding site" evidence="1">
    <location>
        <position position="150"/>
    </location>
    <ligand>
        <name>Zn(2+)</name>
        <dbReference type="ChEBI" id="CHEBI:29105"/>
        <label>2</label>
    </ligand>
</feature>
<feature type="binding site" evidence="1">
    <location>
        <position position="211"/>
    </location>
    <ligand>
        <name>Zn(2+)</name>
        <dbReference type="ChEBI" id="CHEBI:29105"/>
        <label>1</label>
    </ligand>
</feature>
<feature type="disulfide bond" evidence="1">
    <location>
        <begin position="44"/>
        <end position="265"/>
    </location>
</feature>
<feature type="disulfide bond" evidence="1">
    <location>
        <begin position="187"/>
        <end position="235"/>
    </location>
</feature>
<feature type="disulfide bond" evidence="1">
    <location>
        <begin position="216"/>
        <end position="223"/>
    </location>
</feature>
<proteinExistence type="inferred from homology"/>
<name>MEPA_ECOHS</name>
<protein>
    <recommendedName>
        <fullName evidence="1">Penicillin-insensitive murein endopeptidase</fullName>
        <ecNumber evidence="1">3.4.24.-</ecNumber>
    </recommendedName>
    <alternativeName>
        <fullName evidence="1">D-alanyl-D-alanine-endopeptidase</fullName>
        <shortName evidence="1">DD-endopeptidase</shortName>
    </alternativeName>
</protein>
<evidence type="ECO:0000255" key="1">
    <source>
        <dbReference type="HAMAP-Rule" id="MF_01623"/>
    </source>
</evidence>
<evidence type="ECO:0000256" key="2">
    <source>
        <dbReference type="SAM" id="MobiDB-lite"/>
    </source>
</evidence>